<organism>
    <name type="scientific">Vibrio atlanticus (strain LGP32)</name>
    <name type="common">Vibrio splendidus (strain Mel32)</name>
    <dbReference type="NCBI Taxonomy" id="575788"/>
    <lineage>
        <taxon>Bacteria</taxon>
        <taxon>Pseudomonadati</taxon>
        <taxon>Pseudomonadota</taxon>
        <taxon>Gammaproteobacteria</taxon>
        <taxon>Vibrionales</taxon>
        <taxon>Vibrionaceae</taxon>
        <taxon>Vibrio</taxon>
    </lineage>
</organism>
<name>TRPR_VIBA3</name>
<keyword id="KW-0963">Cytoplasm</keyword>
<keyword id="KW-0238">DNA-binding</keyword>
<keyword id="KW-0678">Repressor</keyword>
<keyword id="KW-0804">Transcription</keyword>
<keyword id="KW-0805">Transcription regulation</keyword>
<reference key="1">
    <citation type="submission" date="2009-02" db="EMBL/GenBank/DDBJ databases">
        <title>Vibrio splendidus str. LGP32 complete genome.</title>
        <authorList>
            <person name="Mazel D."/>
            <person name="Le Roux F."/>
        </authorList>
    </citation>
    <scope>NUCLEOTIDE SEQUENCE [LARGE SCALE GENOMIC DNA]</scope>
    <source>
        <strain>LGP32</strain>
    </source>
</reference>
<comment type="function">
    <text evidence="1">This protein is an aporepressor. When complexed with L-tryptophan it binds the operator region of the trp operon and prevents the initiation of transcription.</text>
</comment>
<comment type="subunit">
    <text evidence="1">Homodimer.</text>
</comment>
<comment type="subcellular location">
    <subcellularLocation>
        <location evidence="1">Cytoplasm</location>
    </subcellularLocation>
</comment>
<comment type="similarity">
    <text evidence="1">Belongs to the TrpR family.</text>
</comment>
<sequence length="98" mass="11125">MASQPEYENWQQLMDLVKTAVEKDQHELLLTMMMTPDERDALVARINIFCELMKGEMSQRQVSQMLGVGVATITRGSNELKAKSEQEKAVIADLLLKQ</sequence>
<dbReference type="EMBL" id="FM954972">
    <property type="protein sequence ID" value="CAV17558.1"/>
    <property type="molecule type" value="Genomic_DNA"/>
</dbReference>
<dbReference type="SMR" id="B7VJN4"/>
<dbReference type="STRING" id="575788.VS_0553"/>
<dbReference type="KEGG" id="vsp:VS_0553"/>
<dbReference type="eggNOG" id="COG2973">
    <property type="taxonomic scope" value="Bacteria"/>
</dbReference>
<dbReference type="HOGENOM" id="CLU_147939_0_0_6"/>
<dbReference type="Proteomes" id="UP000009100">
    <property type="component" value="Chromosome 1"/>
</dbReference>
<dbReference type="GO" id="GO:0005737">
    <property type="term" value="C:cytoplasm"/>
    <property type="evidence" value="ECO:0007669"/>
    <property type="project" value="UniProtKB-SubCell"/>
</dbReference>
<dbReference type="GO" id="GO:0003700">
    <property type="term" value="F:DNA-binding transcription factor activity"/>
    <property type="evidence" value="ECO:0007669"/>
    <property type="project" value="InterPro"/>
</dbReference>
<dbReference type="GO" id="GO:0043565">
    <property type="term" value="F:sequence-specific DNA binding"/>
    <property type="evidence" value="ECO:0007669"/>
    <property type="project" value="InterPro"/>
</dbReference>
<dbReference type="GO" id="GO:0045892">
    <property type="term" value="P:negative regulation of DNA-templated transcription"/>
    <property type="evidence" value="ECO:0007669"/>
    <property type="project" value="UniProtKB-UniRule"/>
</dbReference>
<dbReference type="Gene3D" id="1.10.1270.10">
    <property type="entry name" value="TrpR-like"/>
    <property type="match status" value="1"/>
</dbReference>
<dbReference type="HAMAP" id="MF_00475">
    <property type="entry name" value="Trp_repressor"/>
    <property type="match status" value="1"/>
</dbReference>
<dbReference type="InterPro" id="IPR000831">
    <property type="entry name" value="Trp_repress"/>
</dbReference>
<dbReference type="InterPro" id="IPR013335">
    <property type="entry name" value="Trp_repress_bac"/>
</dbReference>
<dbReference type="InterPro" id="IPR010921">
    <property type="entry name" value="Trp_repressor/repl_initiator"/>
</dbReference>
<dbReference type="InterPro" id="IPR038116">
    <property type="entry name" value="TrpR-like_sf"/>
</dbReference>
<dbReference type="NCBIfam" id="TIGR01321">
    <property type="entry name" value="TrpR"/>
    <property type="match status" value="1"/>
</dbReference>
<dbReference type="PANTHER" id="PTHR38025">
    <property type="entry name" value="TRP OPERON REPRESSOR"/>
    <property type="match status" value="1"/>
</dbReference>
<dbReference type="PANTHER" id="PTHR38025:SF1">
    <property type="entry name" value="TRP OPERON REPRESSOR"/>
    <property type="match status" value="1"/>
</dbReference>
<dbReference type="Pfam" id="PF01371">
    <property type="entry name" value="Trp_repressor"/>
    <property type="match status" value="1"/>
</dbReference>
<dbReference type="PIRSF" id="PIRSF003196">
    <property type="entry name" value="Trp_repressor"/>
    <property type="match status" value="1"/>
</dbReference>
<dbReference type="SUPFAM" id="SSF48295">
    <property type="entry name" value="TrpR-like"/>
    <property type="match status" value="1"/>
</dbReference>
<protein>
    <recommendedName>
        <fullName evidence="1">Trp operon repressor homolog</fullName>
    </recommendedName>
</protein>
<feature type="chain" id="PRO_1000135546" description="Trp operon repressor homolog">
    <location>
        <begin position="1"/>
        <end position="98"/>
    </location>
</feature>
<feature type="DNA-binding region" evidence="1">
    <location>
        <begin position="59"/>
        <end position="82"/>
    </location>
</feature>
<evidence type="ECO:0000255" key="1">
    <source>
        <dbReference type="HAMAP-Rule" id="MF_00475"/>
    </source>
</evidence>
<gene>
    <name evidence="1" type="primary">trpR</name>
    <name type="ordered locus">VS_0553</name>
</gene>
<accession>B7VJN4</accession>
<proteinExistence type="inferred from homology"/>